<protein>
    <recommendedName>
        <fullName evidence="1">Glutamate racemase</fullName>
        <ecNumber evidence="1">5.1.1.3</ecNumber>
    </recommendedName>
</protein>
<dbReference type="EC" id="5.1.1.3" evidence="1"/>
<dbReference type="EMBL" id="AP009049">
    <property type="protein sequence ID" value="BAH05157.1"/>
    <property type="molecule type" value="Genomic_DNA"/>
</dbReference>
<dbReference type="RefSeq" id="WP_011988727.1">
    <property type="nucleotide sequence ID" value="NC_011837.1"/>
</dbReference>
<dbReference type="SMR" id="B9DY32"/>
<dbReference type="KEGG" id="ckr:CKR_0106"/>
<dbReference type="HOGENOM" id="CLU_052344_2_1_9"/>
<dbReference type="UniPathway" id="UPA00219"/>
<dbReference type="Proteomes" id="UP000007969">
    <property type="component" value="Chromosome"/>
</dbReference>
<dbReference type="GO" id="GO:0008881">
    <property type="term" value="F:glutamate racemase activity"/>
    <property type="evidence" value="ECO:0007669"/>
    <property type="project" value="UniProtKB-UniRule"/>
</dbReference>
<dbReference type="GO" id="GO:0071555">
    <property type="term" value="P:cell wall organization"/>
    <property type="evidence" value="ECO:0007669"/>
    <property type="project" value="UniProtKB-KW"/>
</dbReference>
<dbReference type="GO" id="GO:0009252">
    <property type="term" value="P:peptidoglycan biosynthetic process"/>
    <property type="evidence" value="ECO:0007669"/>
    <property type="project" value="UniProtKB-UniRule"/>
</dbReference>
<dbReference type="GO" id="GO:0008360">
    <property type="term" value="P:regulation of cell shape"/>
    <property type="evidence" value="ECO:0007669"/>
    <property type="project" value="UniProtKB-KW"/>
</dbReference>
<dbReference type="FunFam" id="3.40.50.1860:FF:000001">
    <property type="entry name" value="Glutamate racemase"/>
    <property type="match status" value="1"/>
</dbReference>
<dbReference type="Gene3D" id="3.40.50.1860">
    <property type="match status" value="2"/>
</dbReference>
<dbReference type="HAMAP" id="MF_00258">
    <property type="entry name" value="Glu_racemase"/>
    <property type="match status" value="1"/>
</dbReference>
<dbReference type="InterPro" id="IPR015942">
    <property type="entry name" value="Asp/Glu/hydantoin_racemase"/>
</dbReference>
<dbReference type="InterPro" id="IPR001920">
    <property type="entry name" value="Asp/Glu_race"/>
</dbReference>
<dbReference type="InterPro" id="IPR018187">
    <property type="entry name" value="Asp/Glu_racemase_AS_1"/>
</dbReference>
<dbReference type="InterPro" id="IPR033134">
    <property type="entry name" value="Asp/Glu_racemase_AS_2"/>
</dbReference>
<dbReference type="InterPro" id="IPR004391">
    <property type="entry name" value="Glu_race"/>
</dbReference>
<dbReference type="NCBIfam" id="TIGR00067">
    <property type="entry name" value="glut_race"/>
    <property type="match status" value="1"/>
</dbReference>
<dbReference type="PANTHER" id="PTHR21198">
    <property type="entry name" value="GLUTAMATE RACEMASE"/>
    <property type="match status" value="1"/>
</dbReference>
<dbReference type="PANTHER" id="PTHR21198:SF3">
    <property type="entry name" value="GLUTAMATE RACEMASE"/>
    <property type="match status" value="1"/>
</dbReference>
<dbReference type="Pfam" id="PF01177">
    <property type="entry name" value="Asp_Glu_race"/>
    <property type="match status" value="1"/>
</dbReference>
<dbReference type="SUPFAM" id="SSF53681">
    <property type="entry name" value="Aspartate/glutamate racemase"/>
    <property type="match status" value="2"/>
</dbReference>
<dbReference type="PROSITE" id="PS00923">
    <property type="entry name" value="ASP_GLU_RACEMASE_1"/>
    <property type="match status" value="1"/>
</dbReference>
<dbReference type="PROSITE" id="PS00924">
    <property type="entry name" value="ASP_GLU_RACEMASE_2"/>
    <property type="match status" value="1"/>
</dbReference>
<accession>B9DY32</accession>
<evidence type="ECO:0000255" key="1">
    <source>
        <dbReference type="HAMAP-Rule" id="MF_00258"/>
    </source>
</evidence>
<sequence>MDSEDRPIGFFDSGVGGISVLKEAVKILSNENFVYFGDSKMAPYGVRTVEEVKKLTFNAVEFLLKKNIKALVVACNTATSAAIIDLRKAYSKYMPIVGIEPALKPAVECNRKGNIIIMATPMTLAESKFNNLMKRYSNSNILPLPCSGLVELIEEGKTEGEEIERYLEEKLIPLKGNGIAAVVLGCTHYPFIKKSISKVLNQDVLILDGSKGTVRQLKRQLIKYHIESNKSKIGKIKIFNSMNSQYIIKLSYKLLKE</sequence>
<gene>
    <name evidence="1" type="primary">murI</name>
    <name type="ordered locus">CKR_0106</name>
</gene>
<comment type="function">
    <text evidence="1">Provides the (R)-glutamate required for cell wall biosynthesis.</text>
</comment>
<comment type="catalytic activity">
    <reaction evidence="1">
        <text>L-glutamate = D-glutamate</text>
        <dbReference type="Rhea" id="RHEA:12813"/>
        <dbReference type="ChEBI" id="CHEBI:29985"/>
        <dbReference type="ChEBI" id="CHEBI:29986"/>
        <dbReference type="EC" id="5.1.1.3"/>
    </reaction>
</comment>
<comment type="pathway">
    <text evidence="1">Cell wall biogenesis; peptidoglycan biosynthesis.</text>
</comment>
<comment type="similarity">
    <text evidence="1">Belongs to the aspartate/glutamate racemases family.</text>
</comment>
<organism>
    <name type="scientific">Clostridium kluyveri (strain NBRC 12016)</name>
    <dbReference type="NCBI Taxonomy" id="583346"/>
    <lineage>
        <taxon>Bacteria</taxon>
        <taxon>Bacillati</taxon>
        <taxon>Bacillota</taxon>
        <taxon>Clostridia</taxon>
        <taxon>Eubacteriales</taxon>
        <taxon>Clostridiaceae</taxon>
        <taxon>Clostridium</taxon>
    </lineage>
</organism>
<reference key="1">
    <citation type="submission" date="2005-09" db="EMBL/GenBank/DDBJ databases">
        <title>Complete genome sequence of Clostridium kluyveri and comparative genomics of Clostridia species.</title>
        <authorList>
            <person name="Inui M."/>
            <person name="Nonaka H."/>
            <person name="Shinoda Y."/>
            <person name="Ikenaga Y."/>
            <person name="Abe M."/>
            <person name="Naito K."/>
            <person name="Vertes A.A."/>
            <person name="Yukawa H."/>
        </authorList>
    </citation>
    <scope>NUCLEOTIDE SEQUENCE [LARGE SCALE GENOMIC DNA]</scope>
    <source>
        <strain>NBRC 12016</strain>
    </source>
</reference>
<feature type="chain" id="PRO_1000125607" description="Glutamate racemase">
    <location>
        <begin position="1"/>
        <end position="257"/>
    </location>
</feature>
<feature type="active site" description="Proton donor/acceptor" evidence="1">
    <location>
        <position position="75"/>
    </location>
</feature>
<feature type="active site" description="Proton donor/acceptor" evidence="1">
    <location>
        <position position="186"/>
    </location>
</feature>
<feature type="binding site" evidence="1">
    <location>
        <begin position="12"/>
        <end position="13"/>
    </location>
    <ligand>
        <name>substrate</name>
    </ligand>
</feature>
<feature type="binding site" evidence="1">
    <location>
        <begin position="44"/>
        <end position="45"/>
    </location>
    <ligand>
        <name>substrate</name>
    </ligand>
</feature>
<feature type="binding site" evidence="1">
    <location>
        <begin position="76"/>
        <end position="77"/>
    </location>
    <ligand>
        <name>substrate</name>
    </ligand>
</feature>
<feature type="binding site" evidence="1">
    <location>
        <begin position="187"/>
        <end position="188"/>
    </location>
    <ligand>
        <name>substrate</name>
    </ligand>
</feature>
<name>MURI_CLOK1</name>
<proteinExistence type="inferred from homology"/>
<keyword id="KW-0133">Cell shape</keyword>
<keyword id="KW-0961">Cell wall biogenesis/degradation</keyword>
<keyword id="KW-0413">Isomerase</keyword>
<keyword id="KW-0573">Peptidoglycan synthesis</keyword>